<feature type="chain" id="PRO_0000383493" description="Probable 4-deoxy-4-formamido-L-arabinose-phosphoundecaprenol deformylase ArnD">
    <location>
        <begin position="1"/>
        <end position="297"/>
    </location>
</feature>
<feature type="domain" description="NodB homology" evidence="1">
    <location>
        <begin position="2"/>
        <end position="261"/>
    </location>
</feature>
<evidence type="ECO:0000255" key="1">
    <source>
        <dbReference type="HAMAP-Rule" id="MF_01870"/>
    </source>
</evidence>
<proteinExistence type="inferred from homology"/>
<comment type="function">
    <text evidence="1">Catalyzes the deformylation of 4-deoxy-4-formamido-L-arabinose-phosphoundecaprenol to 4-amino-4-deoxy-L-arabinose-phosphoundecaprenol. The modified arabinose is attached to lipid A and is required for resistance to polymyxin and cationic antimicrobial peptides.</text>
</comment>
<comment type="catalytic activity">
    <reaction evidence="1">
        <text>4-deoxy-4-formamido-alpha-L-arabinopyranosyl di-trans,octa-cis-undecaprenyl phosphate + H2O = 4-amino-4-deoxy-alpha-L-arabinopyranosyl di-trans,octa-cis-undecaprenyl phosphate + formate</text>
        <dbReference type="Rhea" id="RHEA:27734"/>
        <dbReference type="ChEBI" id="CHEBI:15377"/>
        <dbReference type="ChEBI" id="CHEBI:15740"/>
        <dbReference type="ChEBI" id="CHEBI:58909"/>
        <dbReference type="ChEBI" id="CHEBI:60463"/>
        <dbReference type="EC" id="3.5.1.n3"/>
    </reaction>
</comment>
<comment type="pathway">
    <text evidence="1">Glycolipid biosynthesis; 4-amino-4-deoxy-alpha-L-arabinose undecaprenyl phosphate biosynthesis; 4-amino-4-deoxy-alpha-L-arabinose undecaprenyl phosphate from UDP-4-deoxy-4-formamido-beta-L-arabinose and undecaprenyl phosphate: step 2/2.</text>
</comment>
<comment type="pathway">
    <text evidence="1">Bacterial outer membrane biogenesis; lipopolysaccharide biosynthesis.</text>
</comment>
<comment type="similarity">
    <text evidence="1">Belongs to the polysaccharide deacetylase family. ArnD deformylase subfamily.</text>
</comment>
<dbReference type="EC" id="3.5.1.n3" evidence="1"/>
<dbReference type="EMBL" id="BX950851">
    <property type="protein sequence ID" value="CAG76042.1"/>
    <property type="molecule type" value="Genomic_DNA"/>
</dbReference>
<dbReference type="RefSeq" id="WP_011094666.1">
    <property type="nucleotide sequence ID" value="NC_004547.2"/>
</dbReference>
<dbReference type="SMR" id="Q6D2F2"/>
<dbReference type="STRING" id="218491.ECA3143"/>
<dbReference type="GeneID" id="57209828"/>
<dbReference type="KEGG" id="eca:ECA3143"/>
<dbReference type="PATRIC" id="fig|218491.5.peg.3180"/>
<dbReference type="eggNOG" id="COG0726">
    <property type="taxonomic scope" value="Bacteria"/>
</dbReference>
<dbReference type="HOGENOM" id="CLU_084199_0_0_6"/>
<dbReference type="OrthoDB" id="5589314at2"/>
<dbReference type="UniPathway" id="UPA00030"/>
<dbReference type="UniPathway" id="UPA00036">
    <property type="reaction ID" value="UER00496"/>
</dbReference>
<dbReference type="Proteomes" id="UP000007966">
    <property type="component" value="Chromosome"/>
</dbReference>
<dbReference type="GO" id="GO:0016020">
    <property type="term" value="C:membrane"/>
    <property type="evidence" value="ECO:0007669"/>
    <property type="project" value="GOC"/>
</dbReference>
<dbReference type="GO" id="GO:0016811">
    <property type="term" value="F:hydrolase activity, acting on carbon-nitrogen (but not peptide) bonds, in linear amides"/>
    <property type="evidence" value="ECO:0007669"/>
    <property type="project" value="UniProtKB-UniRule"/>
</dbReference>
<dbReference type="GO" id="GO:0036108">
    <property type="term" value="P:4-amino-4-deoxy-alpha-L-arabinopyranosyl undecaprenyl phosphate biosynthetic process"/>
    <property type="evidence" value="ECO:0007669"/>
    <property type="project" value="UniProtKB-UniRule"/>
</dbReference>
<dbReference type="GO" id="GO:0009245">
    <property type="term" value="P:lipid A biosynthetic process"/>
    <property type="evidence" value="ECO:0007669"/>
    <property type="project" value="UniProtKB-UniRule"/>
</dbReference>
<dbReference type="GO" id="GO:0009103">
    <property type="term" value="P:lipopolysaccharide biosynthetic process"/>
    <property type="evidence" value="ECO:0007669"/>
    <property type="project" value="UniProtKB-UniRule"/>
</dbReference>
<dbReference type="GO" id="GO:0046677">
    <property type="term" value="P:response to antibiotic"/>
    <property type="evidence" value="ECO:0007669"/>
    <property type="project" value="UniProtKB-KW"/>
</dbReference>
<dbReference type="Gene3D" id="3.20.20.370">
    <property type="entry name" value="Glycoside hydrolase/deacetylase"/>
    <property type="match status" value="1"/>
</dbReference>
<dbReference type="HAMAP" id="MF_01870">
    <property type="entry name" value="ArnD"/>
    <property type="match status" value="1"/>
</dbReference>
<dbReference type="InterPro" id="IPR023557">
    <property type="entry name" value="ArnD"/>
</dbReference>
<dbReference type="InterPro" id="IPR011330">
    <property type="entry name" value="Glyco_hydro/deAcase_b/a-brl"/>
</dbReference>
<dbReference type="InterPro" id="IPR002509">
    <property type="entry name" value="NODB_dom"/>
</dbReference>
<dbReference type="InterPro" id="IPR050248">
    <property type="entry name" value="Polysacc_deacetylase_ArnD"/>
</dbReference>
<dbReference type="NCBIfam" id="NF011923">
    <property type="entry name" value="PRK15394.1"/>
    <property type="match status" value="1"/>
</dbReference>
<dbReference type="PANTHER" id="PTHR10587:SF137">
    <property type="entry name" value="4-DEOXY-4-FORMAMIDO-L-ARABINOSE-PHOSPHOUNDECAPRENOL DEFORMYLASE ARND-RELATED"/>
    <property type="match status" value="1"/>
</dbReference>
<dbReference type="PANTHER" id="PTHR10587">
    <property type="entry name" value="GLYCOSYL TRANSFERASE-RELATED"/>
    <property type="match status" value="1"/>
</dbReference>
<dbReference type="Pfam" id="PF01522">
    <property type="entry name" value="Polysacc_deac_1"/>
    <property type="match status" value="1"/>
</dbReference>
<dbReference type="SUPFAM" id="SSF88713">
    <property type="entry name" value="Glycoside hydrolase/deacetylase"/>
    <property type="match status" value="1"/>
</dbReference>
<dbReference type="PROSITE" id="PS51677">
    <property type="entry name" value="NODB"/>
    <property type="match status" value="1"/>
</dbReference>
<name>ARND_PECAS</name>
<accession>Q6D2F2</accession>
<organism>
    <name type="scientific">Pectobacterium atrosepticum (strain SCRI 1043 / ATCC BAA-672)</name>
    <name type="common">Erwinia carotovora subsp. atroseptica</name>
    <dbReference type="NCBI Taxonomy" id="218491"/>
    <lineage>
        <taxon>Bacteria</taxon>
        <taxon>Pseudomonadati</taxon>
        <taxon>Pseudomonadota</taxon>
        <taxon>Gammaproteobacteria</taxon>
        <taxon>Enterobacterales</taxon>
        <taxon>Pectobacteriaceae</taxon>
        <taxon>Pectobacterium</taxon>
    </lineage>
</organism>
<reference key="1">
    <citation type="journal article" date="2004" name="Proc. Natl. Acad. Sci. U.S.A.">
        <title>Genome sequence of the enterobacterial phytopathogen Erwinia carotovora subsp. atroseptica and characterization of virulence factors.</title>
        <authorList>
            <person name="Bell K.S."/>
            <person name="Sebaihia M."/>
            <person name="Pritchard L."/>
            <person name="Holden M.T.G."/>
            <person name="Hyman L.J."/>
            <person name="Holeva M.C."/>
            <person name="Thomson N.R."/>
            <person name="Bentley S.D."/>
            <person name="Churcher L.J.C."/>
            <person name="Mungall K."/>
            <person name="Atkin R."/>
            <person name="Bason N."/>
            <person name="Brooks K."/>
            <person name="Chillingworth T."/>
            <person name="Clark K."/>
            <person name="Doggett J."/>
            <person name="Fraser A."/>
            <person name="Hance Z."/>
            <person name="Hauser H."/>
            <person name="Jagels K."/>
            <person name="Moule S."/>
            <person name="Norbertczak H."/>
            <person name="Ormond D."/>
            <person name="Price C."/>
            <person name="Quail M.A."/>
            <person name="Sanders M."/>
            <person name="Walker D."/>
            <person name="Whitehead S."/>
            <person name="Salmond G.P.C."/>
            <person name="Birch P.R.J."/>
            <person name="Parkhill J."/>
            <person name="Toth I.K."/>
        </authorList>
    </citation>
    <scope>NUCLEOTIDE SEQUENCE [LARGE SCALE GENOMIC DNA]</scope>
    <source>
        <strain>SCRI 1043 / ATCC BAA-672</strain>
    </source>
</reference>
<protein>
    <recommendedName>
        <fullName evidence="1">Probable 4-deoxy-4-formamido-L-arabinose-phosphoundecaprenol deformylase ArnD</fullName>
        <ecNumber evidence="1">3.5.1.n3</ecNumber>
    </recommendedName>
</protein>
<sequence length="297" mass="33439">MTRVGLRIDVDTWRGTRDGVPALLKVLAEFDIQASFFFSVGPDNMGRHLWRLLRPRFLWKMLRSNAASLYGWDILLAGTAWPGRHIGARFGSLIRQTHDAGHEVGLHSWDHHGWQANVARWSDAQLAAQFHEGMDALTQILPSPVRCSAVAGWRADARVVEMKQRWNLDYNSDCRGTQPFRPRLKNGGLGTTQIPVTLPTYDEVIGERVSDGEFNDFILDAIEQDRGVPVYTIHAEVEGGAKLALFRQLLLLARQRHIEFCPLSSLLPDDSTTLPVGRIERAPFPGREGWLGVQTEE</sequence>
<keyword id="KW-0046">Antibiotic resistance</keyword>
<keyword id="KW-0378">Hydrolase</keyword>
<keyword id="KW-0441">Lipid A biosynthesis</keyword>
<keyword id="KW-0444">Lipid biosynthesis</keyword>
<keyword id="KW-0443">Lipid metabolism</keyword>
<keyword id="KW-0448">Lipopolysaccharide biosynthesis</keyword>
<keyword id="KW-1185">Reference proteome</keyword>
<gene>
    <name evidence="1" type="primary">arnD</name>
    <name type="ordered locus">ECA3143</name>
</gene>